<reference key="1">
    <citation type="journal article" date="1997" name="J. Ind. Microbiol. Biotechnol.">
        <title>Detection and speciation of bacteria through PCR using universal major cold-shock protein primer oligomers.</title>
        <authorList>
            <person name="Francis K.P."/>
            <person name="Stewart G.S.A.B."/>
        </authorList>
    </citation>
    <scope>NUCLEOTIDE SEQUENCE [GENOMIC DNA]</scope>
    <source>
        <strain>NCIMB 841</strain>
    </source>
</reference>
<evidence type="ECO:0000250" key="1"/>
<dbReference type="EMBL" id="U60045">
    <property type="protein sequence ID" value="AAC80249.1"/>
    <property type="molecule type" value="Genomic_DNA"/>
</dbReference>
<dbReference type="SMR" id="Q51929"/>
<dbReference type="GO" id="GO:0005829">
    <property type="term" value="C:cytosol"/>
    <property type="evidence" value="ECO:0007669"/>
    <property type="project" value="UniProtKB-ARBA"/>
</dbReference>
<dbReference type="GO" id="GO:0003677">
    <property type="term" value="F:DNA binding"/>
    <property type="evidence" value="ECO:0007669"/>
    <property type="project" value="UniProtKB-KW"/>
</dbReference>
<dbReference type="CDD" id="cd04458">
    <property type="entry name" value="CSP_CDS"/>
    <property type="match status" value="1"/>
</dbReference>
<dbReference type="Gene3D" id="2.40.50.140">
    <property type="entry name" value="Nucleic acid-binding proteins"/>
    <property type="match status" value="1"/>
</dbReference>
<dbReference type="InterPro" id="IPR012156">
    <property type="entry name" value="Cold_shock_CspA"/>
</dbReference>
<dbReference type="InterPro" id="IPR011129">
    <property type="entry name" value="CSD"/>
</dbReference>
<dbReference type="InterPro" id="IPR019844">
    <property type="entry name" value="CSD_CS"/>
</dbReference>
<dbReference type="InterPro" id="IPR002059">
    <property type="entry name" value="CSP_DNA-bd"/>
</dbReference>
<dbReference type="InterPro" id="IPR012340">
    <property type="entry name" value="NA-bd_OB-fold"/>
</dbReference>
<dbReference type="PANTHER" id="PTHR46565">
    <property type="entry name" value="COLD SHOCK DOMAIN PROTEIN 2"/>
    <property type="match status" value="1"/>
</dbReference>
<dbReference type="PANTHER" id="PTHR46565:SF20">
    <property type="entry name" value="COLD SHOCK DOMAIN-CONTAINING PROTEIN 4"/>
    <property type="match status" value="1"/>
</dbReference>
<dbReference type="Pfam" id="PF00313">
    <property type="entry name" value="CSD"/>
    <property type="match status" value="1"/>
</dbReference>
<dbReference type="PIRSF" id="PIRSF002599">
    <property type="entry name" value="Cold_shock_A"/>
    <property type="match status" value="1"/>
</dbReference>
<dbReference type="PRINTS" id="PR00050">
    <property type="entry name" value="COLDSHOCK"/>
</dbReference>
<dbReference type="SMART" id="SM00357">
    <property type="entry name" value="CSP"/>
    <property type="match status" value="1"/>
</dbReference>
<dbReference type="SUPFAM" id="SSF50249">
    <property type="entry name" value="Nucleic acid-binding proteins"/>
    <property type="match status" value="1"/>
</dbReference>
<dbReference type="PROSITE" id="PS00352">
    <property type="entry name" value="CSD_1"/>
    <property type="match status" value="1"/>
</dbReference>
<dbReference type="PROSITE" id="PS51857">
    <property type="entry name" value="CSD_2"/>
    <property type="match status" value="1"/>
</dbReference>
<keyword id="KW-0010">Activator</keyword>
<keyword id="KW-0963">Cytoplasm</keyword>
<keyword id="KW-0238">DNA-binding</keyword>
<keyword id="KW-0346">Stress response</keyword>
<keyword id="KW-0804">Transcription</keyword>
<keyword id="KW-0805">Transcription regulation</keyword>
<name>CSPA_PHOLD</name>
<organism>
    <name type="scientific">Photobacterium leiognathi subsp. mandapamensis</name>
    <name type="common">Photobacterium mandapamensis</name>
    <dbReference type="NCBI Taxonomy" id="48408"/>
    <lineage>
        <taxon>Bacteria</taxon>
        <taxon>Pseudomonadati</taxon>
        <taxon>Pseudomonadota</taxon>
        <taxon>Gammaproteobacteria</taxon>
        <taxon>Vibrionales</taxon>
        <taxon>Vibrionaceae</taxon>
        <taxon>Photobacterium</taxon>
    </lineage>
</organism>
<protein>
    <recommendedName>
        <fullName>Major cold shock protein</fullName>
    </recommendedName>
</protein>
<comment type="subunit">
    <text evidence="1">Homodimer.</text>
</comment>
<comment type="subcellular location">
    <subcellularLocation>
        <location evidence="1">Cytoplasm</location>
    </subcellularLocation>
</comment>
<comment type="induction">
    <text evidence="1">In response to low temperature.</text>
</comment>
<feature type="chain" id="PRO_0000100314" description="Major cold shock protein">
    <location>
        <begin position="1" status="less than"/>
        <end position="46" status="greater than"/>
    </location>
</feature>
<feature type="domain" description="CSD">
    <location>
        <begin position="1" status="less than"/>
        <end position="46" status="greater than"/>
    </location>
</feature>
<feature type="non-terminal residue">
    <location>
        <position position="1"/>
    </location>
</feature>
<feature type="non-terminal residue">
    <location>
        <position position="46"/>
    </location>
</feature>
<sequence>EKGFGFLTQNNGGADVFVHFRAIASEGFKTLTEGQKVSFDVEQGQK</sequence>
<gene>
    <name type="primary">cspA</name>
</gene>
<proteinExistence type="inferred from homology"/>
<accession>Q51929</accession>